<reference key="1">
    <citation type="journal article" date="1992" name="Eur. J. Biochem.">
        <title>Primary structures of ribosomal proteins L3 and L4 from Bacillus stearothermophilus.</title>
        <authorList>
            <person name="Herwig S."/>
            <person name="Kruft V."/>
            <person name="Wittmann-Liebold B."/>
        </authorList>
    </citation>
    <scope>NUCLEOTIDE SEQUENCE [GENOMIC DNA]</scope>
    <scope>PARTIAL PROTEIN SEQUENCE</scope>
    <source>
        <strain>799</strain>
    </source>
</reference>
<evidence type="ECO:0000255" key="1">
    <source>
        <dbReference type="HAMAP-Rule" id="MF_01325"/>
    </source>
</evidence>
<evidence type="ECO:0000256" key="2">
    <source>
        <dbReference type="SAM" id="MobiDB-lite"/>
    </source>
</evidence>
<evidence type="ECO:0000305" key="3"/>
<dbReference type="EMBL" id="X67014">
    <property type="protein sequence ID" value="CAA47402.1"/>
    <property type="molecule type" value="Genomic_DNA"/>
</dbReference>
<dbReference type="PIR" id="S24363">
    <property type="entry name" value="S24363"/>
</dbReference>
<dbReference type="RefSeq" id="WP_033008659.1">
    <property type="nucleotide sequence ID" value="NZ_RCTK01000011.1"/>
</dbReference>
<dbReference type="SMR" id="P28600"/>
<dbReference type="GeneID" id="89612900"/>
<dbReference type="OrthoDB" id="9806135at2"/>
<dbReference type="GO" id="GO:0022625">
    <property type="term" value="C:cytosolic large ribosomal subunit"/>
    <property type="evidence" value="ECO:0007669"/>
    <property type="project" value="TreeGrafter"/>
</dbReference>
<dbReference type="GO" id="GO:0019843">
    <property type="term" value="F:rRNA binding"/>
    <property type="evidence" value="ECO:0007669"/>
    <property type="project" value="UniProtKB-UniRule"/>
</dbReference>
<dbReference type="GO" id="GO:0003735">
    <property type="term" value="F:structural constituent of ribosome"/>
    <property type="evidence" value="ECO:0007669"/>
    <property type="project" value="InterPro"/>
</dbReference>
<dbReference type="GO" id="GO:0006412">
    <property type="term" value="P:translation"/>
    <property type="evidence" value="ECO:0007669"/>
    <property type="project" value="UniProtKB-UniRule"/>
</dbReference>
<dbReference type="FunFam" id="2.40.30.10:FF:000004">
    <property type="entry name" value="50S ribosomal protein L3"/>
    <property type="match status" value="1"/>
</dbReference>
<dbReference type="FunFam" id="3.30.160.810:FF:000002">
    <property type="entry name" value="50S ribosomal protein L3"/>
    <property type="match status" value="1"/>
</dbReference>
<dbReference type="Gene3D" id="3.30.160.810">
    <property type="match status" value="1"/>
</dbReference>
<dbReference type="Gene3D" id="2.40.30.10">
    <property type="entry name" value="Translation factors"/>
    <property type="match status" value="1"/>
</dbReference>
<dbReference type="HAMAP" id="MF_01325_B">
    <property type="entry name" value="Ribosomal_uL3_B"/>
    <property type="match status" value="1"/>
</dbReference>
<dbReference type="InterPro" id="IPR000597">
    <property type="entry name" value="Ribosomal_uL3"/>
</dbReference>
<dbReference type="InterPro" id="IPR019927">
    <property type="entry name" value="Ribosomal_uL3_bac/org-type"/>
</dbReference>
<dbReference type="InterPro" id="IPR019926">
    <property type="entry name" value="Ribosomal_uL3_CS"/>
</dbReference>
<dbReference type="InterPro" id="IPR009000">
    <property type="entry name" value="Transl_B-barrel_sf"/>
</dbReference>
<dbReference type="NCBIfam" id="TIGR03625">
    <property type="entry name" value="L3_bact"/>
    <property type="match status" value="1"/>
</dbReference>
<dbReference type="PANTHER" id="PTHR11229">
    <property type="entry name" value="50S RIBOSOMAL PROTEIN L3"/>
    <property type="match status" value="1"/>
</dbReference>
<dbReference type="PANTHER" id="PTHR11229:SF16">
    <property type="entry name" value="LARGE RIBOSOMAL SUBUNIT PROTEIN UL3C"/>
    <property type="match status" value="1"/>
</dbReference>
<dbReference type="Pfam" id="PF00297">
    <property type="entry name" value="Ribosomal_L3"/>
    <property type="match status" value="1"/>
</dbReference>
<dbReference type="SUPFAM" id="SSF50447">
    <property type="entry name" value="Translation proteins"/>
    <property type="match status" value="1"/>
</dbReference>
<dbReference type="PROSITE" id="PS00474">
    <property type="entry name" value="RIBOSOMAL_L3"/>
    <property type="match status" value="1"/>
</dbReference>
<accession>P28600</accession>
<proteinExistence type="evidence at protein level"/>
<name>RL3_GEOSE</name>
<protein>
    <recommendedName>
        <fullName evidence="1">Large ribosomal subunit protein uL3</fullName>
    </recommendedName>
    <alternativeName>
        <fullName evidence="3">50S ribosomal protein L3</fullName>
    </alternativeName>
</protein>
<sequence length="213" mass="23188">MTKGILGRKIGMTQIFAENGDLIPVTVIHATPNVVLQKKTIENDGYEAIQLGFEDISEKRANKPQIGHAAKANTAPKRFIREIRGANINEYEVGQEVKVDIFSEGDIVDVTGISKGKGFQGAIKRHGQSRGPMAHGSRYHRRPGSMGAIAPNRVFKTKNLPGRMGGERVTIQNLKIVKVDPERNLLLIKGNVPGPRKGLVIVKSAVKAKAKAK</sequence>
<keyword id="KW-0903">Direct protein sequencing</keyword>
<keyword id="KW-0687">Ribonucleoprotein</keyword>
<keyword id="KW-0689">Ribosomal protein</keyword>
<keyword id="KW-0694">RNA-binding</keyword>
<keyword id="KW-0699">rRNA-binding</keyword>
<organism>
    <name type="scientific">Geobacillus stearothermophilus</name>
    <name type="common">Bacillus stearothermophilus</name>
    <dbReference type="NCBI Taxonomy" id="1422"/>
    <lineage>
        <taxon>Bacteria</taxon>
        <taxon>Bacillati</taxon>
        <taxon>Bacillota</taxon>
        <taxon>Bacilli</taxon>
        <taxon>Bacillales</taxon>
        <taxon>Anoxybacillaceae</taxon>
        <taxon>Geobacillus</taxon>
    </lineage>
</organism>
<feature type="chain" id="PRO_0000077065" description="Large ribosomal subunit protein uL3">
    <location>
        <begin position="1"/>
        <end position="213"/>
    </location>
</feature>
<feature type="region of interest" description="Disordered" evidence="2">
    <location>
        <begin position="122"/>
        <end position="147"/>
    </location>
</feature>
<gene>
    <name evidence="1" type="primary">rplC</name>
</gene>
<comment type="function">
    <text evidence="1">One of the primary rRNA binding proteins, it binds directly near the 3'-end of the 23S rRNA, where it nucleates assembly of the 50S subunit.</text>
</comment>
<comment type="subunit">
    <text evidence="1">Part of the 50S ribosomal subunit. Forms a cluster with proteins L14 and L19.</text>
</comment>
<comment type="similarity">
    <text evidence="1">Belongs to the universal ribosomal protein uL3 family.</text>
</comment>